<organismHost>
    <name type="scientific">Homo sapiens</name>
    <name type="common">Human</name>
    <dbReference type="NCBI Taxonomy" id="9606"/>
</organismHost>
<organism>
    <name type="scientific">Rotavirus X (strain RVX/Human/China/NADRV-J19/1997/GXP[X])</name>
    <name type="common">RV ADRV-N</name>
    <name type="synonym">Rotavirus (isolate novel adult diarrhea rotavirus-J19)</name>
    <dbReference type="NCBI Taxonomy" id="335103"/>
    <lineage>
        <taxon>Viruses</taxon>
        <taxon>Riboviria</taxon>
        <taxon>Orthornavirae</taxon>
        <taxon>Duplornaviricota</taxon>
        <taxon>Resentoviricetes</taxon>
        <taxon>Reovirales</taxon>
        <taxon>Sedoreoviridae</taxon>
        <taxon>Rotavirus</taxon>
        <taxon>Rotavirus H</taxon>
    </lineage>
</organism>
<keyword id="KW-0325">Glycoprotein</keyword>
<keyword id="KW-1035">Host cytoplasm</keyword>
<keyword id="KW-0547">Nucleotide-binding</keyword>
<keyword id="KW-1185">Reference proteome</keyword>
<keyword id="KW-0694">RNA-binding</keyword>
<comment type="function">
    <text evidence="1">Plays an essential role in the viral genome replication. Participates, together with NSP2, in the formation of viral factories (viroplasms) which are large inclusions in the host cytoplasm where replication intermediates are assembled and viral RNA replication takes place. Orchestrates the recruitment of viroplasmic proteins such as capsid proteins to these factories.</text>
</comment>
<comment type="subunit">
    <text evidence="1">Homodimer. Interacts with VP1. Interacts with VP2. Interacts with NSP2; this interaction leads to up-regulation of NSP5 hyperphosphorylation and formation of virus factories. Interacts with NSP6.</text>
</comment>
<comment type="subcellular location">
    <subcellularLocation>
        <location evidence="1">Host cytoplasm</location>
    </subcellularLocation>
    <text evidence="1">Found in spherical cytoplasmic structures, called virus factories, that appear early after infection and are the site of viral replication and packaging.</text>
</comment>
<comment type="PTM">
    <text evidence="1">O-glycosylated.</text>
</comment>
<comment type="similarity">
    <text evidence="1">Belongs to the rotavirus NSP5 family.</text>
</comment>
<dbReference type="EMBL" id="DQ113907">
    <property type="protein sequence ID" value="AAZ03495.1"/>
    <property type="molecule type" value="Genomic_RNA"/>
</dbReference>
<dbReference type="RefSeq" id="YP_392500.1">
    <property type="nucleotide sequence ID" value="NC_007558.1"/>
</dbReference>
<dbReference type="GeneID" id="5076660"/>
<dbReference type="KEGG" id="vg:5076660"/>
<dbReference type="OrthoDB" id="40940at10239"/>
<dbReference type="Proteomes" id="UP000007663">
    <property type="component" value="Genome"/>
</dbReference>
<dbReference type="GO" id="GO:0030430">
    <property type="term" value="C:host cell cytoplasm"/>
    <property type="evidence" value="ECO:0007669"/>
    <property type="project" value="UniProtKB-SubCell"/>
</dbReference>
<dbReference type="GO" id="GO:0016887">
    <property type="term" value="F:ATP hydrolysis activity"/>
    <property type="evidence" value="ECO:0007669"/>
    <property type="project" value="UniProtKB-UniRule"/>
</dbReference>
<dbReference type="GO" id="GO:0000287">
    <property type="term" value="F:magnesium ion binding"/>
    <property type="evidence" value="ECO:0007669"/>
    <property type="project" value="UniProtKB-UniRule"/>
</dbReference>
<dbReference type="GO" id="GO:0000166">
    <property type="term" value="F:nucleotide binding"/>
    <property type="evidence" value="ECO:0007669"/>
    <property type="project" value="UniProtKB-UniRule"/>
</dbReference>
<dbReference type="GO" id="GO:0003723">
    <property type="term" value="F:RNA binding"/>
    <property type="evidence" value="ECO:0007669"/>
    <property type="project" value="UniProtKB-UniRule"/>
</dbReference>
<dbReference type="GO" id="GO:0019079">
    <property type="term" value="P:viral genome replication"/>
    <property type="evidence" value="ECO:0007669"/>
    <property type="project" value="UniProtKB-UniRule"/>
</dbReference>
<dbReference type="HAMAP" id="MF_04092">
    <property type="entry name" value="ROTA_NSP5"/>
    <property type="match status" value="1"/>
</dbReference>
<dbReference type="InterPro" id="IPR002512">
    <property type="entry name" value="Rotavirus_A/C_NSP5"/>
</dbReference>
<dbReference type="InterPro" id="IPR020244">
    <property type="entry name" value="Rotavirus_B_NSP5"/>
</dbReference>
<dbReference type="Pfam" id="PF17580">
    <property type="entry name" value="GBR_NSP5"/>
    <property type="match status" value="1"/>
</dbReference>
<evidence type="ECO:0000255" key="1">
    <source>
        <dbReference type="HAMAP-Rule" id="MF_04092"/>
    </source>
</evidence>
<reference key="1">
    <citation type="journal article" date="2008" name="J. Gen. Virol.">
        <title>Molecular characterization of a novel adult diarrhoea rotavirus strain J19 isolated in China and its significance for the evolution and origin of group B rotaviruses.</title>
        <authorList>
            <person name="Jiang S."/>
            <person name="Ji S."/>
            <person name="Tang Q."/>
            <person name="Cui X."/>
            <person name="Yang H."/>
            <person name="Kan B."/>
            <person name="Gao S."/>
        </authorList>
    </citation>
    <scope>NUCLEOTIDE SEQUENCE [GENOMIC RNA]</scope>
</reference>
<protein>
    <recommendedName>
        <fullName evidence="1">Non-structural protein 5</fullName>
        <shortName evidence="1">NSP5</shortName>
    </recommendedName>
    <alternativeName>
        <fullName evidence="1">NS26</fullName>
    </alternativeName>
</protein>
<feature type="chain" id="PRO_0000369868" description="Non-structural protein 5">
    <location>
        <begin position="1"/>
        <end position="176"/>
    </location>
</feature>
<proteinExistence type="inferred from homology"/>
<sequence>MSEVPRFELRSKRKIGKKQKVDIFGDKDDESMLQIDCETDSLISESVSSTHSYEDYSKAYKELTLETPADVNDSASTIVDSVCEESWYDKTIKDEQTKEDKKTDKKLKRIEKVKENNQNDSMSLQIAQLSLRIQRIESETKLKTLDSAYNTIITQADNLTTPQKKSLISAILATMR</sequence>
<accession>Q45UF0</accession>
<name>NSP5_ROTJ1</name>